<feature type="chain" id="PRO_1000000628" description="Thymidylate synthase">
    <location>
        <begin position="1"/>
        <end position="266"/>
    </location>
</feature>
<feature type="active site" description="Nucleophile" evidence="2">
    <location>
        <position position="149"/>
    </location>
</feature>
<feature type="binding site" description="in other chain" evidence="2">
    <location>
        <position position="24"/>
    </location>
    <ligand>
        <name>dUMP</name>
        <dbReference type="ChEBI" id="CHEBI:246422"/>
        <note>ligand shared between dimeric partners</note>
    </ligand>
</feature>
<feature type="binding site" evidence="2">
    <location>
        <position position="54"/>
    </location>
    <ligand>
        <name>(6R)-5,10-methylene-5,6,7,8-tetrahydrofolate</name>
        <dbReference type="ChEBI" id="CHEBI:15636"/>
    </ligand>
</feature>
<feature type="binding site" evidence="2">
    <location>
        <begin position="129"/>
        <end position="130"/>
    </location>
    <ligand>
        <name>dUMP</name>
        <dbReference type="ChEBI" id="CHEBI:246422"/>
        <note>ligand shared between dimeric partners</note>
    </ligand>
</feature>
<feature type="binding site" description="in other chain" evidence="2">
    <location>
        <begin position="169"/>
        <end position="172"/>
    </location>
    <ligand>
        <name>dUMP</name>
        <dbReference type="ChEBI" id="CHEBI:246422"/>
        <note>ligand shared between dimeric partners</note>
    </ligand>
</feature>
<feature type="binding site" evidence="2">
    <location>
        <position position="172"/>
    </location>
    <ligand>
        <name>(6R)-5,10-methylene-5,6,7,8-tetrahydrofolate</name>
        <dbReference type="ChEBI" id="CHEBI:15636"/>
    </ligand>
</feature>
<feature type="binding site" description="in other chain" evidence="2">
    <location>
        <position position="180"/>
    </location>
    <ligand>
        <name>dUMP</name>
        <dbReference type="ChEBI" id="CHEBI:246422"/>
        <note>ligand shared between dimeric partners</note>
    </ligand>
</feature>
<feature type="binding site" description="in other chain" evidence="2">
    <location>
        <begin position="210"/>
        <end position="212"/>
    </location>
    <ligand>
        <name>dUMP</name>
        <dbReference type="ChEBI" id="CHEBI:246422"/>
        <note>ligand shared between dimeric partners</note>
    </ligand>
</feature>
<feature type="binding site" evidence="2">
    <location>
        <position position="265"/>
    </location>
    <ligand>
        <name>(6R)-5,10-methylene-5,6,7,8-tetrahydrofolate</name>
        <dbReference type="ChEBI" id="CHEBI:15636"/>
    </ligand>
</feature>
<keyword id="KW-0963">Cytoplasm</keyword>
<keyword id="KW-0489">Methyltransferase</keyword>
<keyword id="KW-0545">Nucleotide biosynthesis</keyword>
<keyword id="KW-0808">Transferase</keyword>
<gene>
    <name evidence="2" type="primary">thyA</name>
    <name type="ordered locus">BCG_2781c</name>
</gene>
<reference key="1">
    <citation type="journal article" date="2007" name="Proc. Natl. Acad. Sci. U.S.A.">
        <title>Genome plasticity of BCG and impact on vaccine efficacy.</title>
        <authorList>
            <person name="Brosch R."/>
            <person name="Gordon S.V."/>
            <person name="Garnier T."/>
            <person name="Eiglmeier K."/>
            <person name="Frigui W."/>
            <person name="Valenti P."/>
            <person name="Dos Santos S."/>
            <person name="Duthoy S."/>
            <person name="Lacroix C."/>
            <person name="Garcia-Pelayo C."/>
            <person name="Inwald J.K."/>
            <person name="Golby P."/>
            <person name="Garcia J.N."/>
            <person name="Hewinson R.G."/>
            <person name="Behr M.A."/>
            <person name="Quail M.A."/>
            <person name="Churcher C."/>
            <person name="Barrell B.G."/>
            <person name="Parkhill J."/>
            <person name="Cole S.T."/>
        </authorList>
    </citation>
    <scope>NUCLEOTIDE SEQUENCE [LARGE SCALE GENOMIC DNA]</scope>
    <source>
        <strain>BCG / Pasteur 1173P2</strain>
    </source>
</reference>
<dbReference type="EC" id="2.1.1.45" evidence="2"/>
<dbReference type="EMBL" id="AM408590">
    <property type="protein sequence ID" value="CAL72769.1"/>
    <property type="status" value="ALT_INIT"/>
    <property type="molecule type" value="Genomic_DNA"/>
</dbReference>
<dbReference type="RefSeq" id="WP_003911953.1">
    <property type="nucleotide sequence ID" value="NC_008769.1"/>
</dbReference>
<dbReference type="SMR" id="A1KMA6"/>
<dbReference type="KEGG" id="mbb:BCG_2781c"/>
<dbReference type="HOGENOM" id="CLU_021669_0_0_11"/>
<dbReference type="UniPathway" id="UPA00575"/>
<dbReference type="Proteomes" id="UP000001472">
    <property type="component" value="Chromosome"/>
</dbReference>
<dbReference type="GO" id="GO:0005829">
    <property type="term" value="C:cytosol"/>
    <property type="evidence" value="ECO:0007669"/>
    <property type="project" value="TreeGrafter"/>
</dbReference>
<dbReference type="GO" id="GO:0004799">
    <property type="term" value="F:thymidylate synthase activity"/>
    <property type="evidence" value="ECO:0007669"/>
    <property type="project" value="UniProtKB-UniRule"/>
</dbReference>
<dbReference type="GO" id="GO:0006231">
    <property type="term" value="P:dTMP biosynthetic process"/>
    <property type="evidence" value="ECO:0007669"/>
    <property type="project" value="UniProtKB-UniRule"/>
</dbReference>
<dbReference type="GO" id="GO:0006235">
    <property type="term" value="P:dTTP biosynthetic process"/>
    <property type="evidence" value="ECO:0007669"/>
    <property type="project" value="UniProtKB-UniRule"/>
</dbReference>
<dbReference type="GO" id="GO:0032259">
    <property type="term" value="P:methylation"/>
    <property type="evidence" value="ECO:0007669"/>
    <property type="project" value="UniProtKB-KW"/>
</dbReference>
<dbReference type="CDD" id="cd00351">
    <property type="entry name" value="TS_Pyrimidine_HMase"/>
    <property type="match status" value="1"/>
</dbReference>
<dbReference type="FunFam" id="3.30.572.10:FF:000001">
    <property type="entry name" value="Thymidylate synthase"/>
    <property type="match status" value="1"/>
</dbReference>
<dbReference type="Gene3D" id="3.30.572.10">
    <property type="entry name" value="Thymidylate synthase/dCMP hydroxymethylase domain"/>
    <property type="match status" value="1"/>
</dbReference>
<dbReference type="HAMAP" id="MF_00008">
    <property type="entry name" value="Thymidy_synth_bact"/>
    <property type="match status" value="1"/>
</dbReference>
<dbReference type="InterPro" id="IPR045097">
    <property type="entry name" value="Thymidate_synth/dCMP_Mease"/>
</dbReference>
<dbReference type="InterPro" id="IPR023451">
    <property type="entry name" value="Thymidate_synth/dCMP_Mease_dom"/>
</dbReference>
<dbReference type="InterPro" id="IPR036926">
    <property type="entry name" value="Thymidate_synth/dCMP_Mease_sf"/>
</dbReference>
<dbReference type="InterPro" id="IPR000398">
    <property type="entry name" value="Thymidylate_synthase"/>
</dbReference>
<dbReference type="InterPro" id="IPR020940">
    <property type="entry name" value="Thymidylate_synthase_AS"/>
</dbReference>
<dbReference type="NCBIfam" id="NF002497">
    <property type="entry name" value="PRK01827.1-3"/>
    <property type="match status" value="1"/>
</dbReference>
<dbReference type="NCBIfam" id="NF002499">
    <property type="entry name" value="PRK01827.1-5"/>
    <property type="match status" value="1"/>
</dbReference>
<dbReference type="NCBIfam" id="TIGR03284">
    <property type="entry name" value="thym_sym"/>
    <property type="match status" value="2"/>
</dbReference>
<dbReference type="PANTHER" id="PTHR11548:SF9">
    <property type="entry name" value="THYMIDYLATE SYNTHASE"/>
    <property type="match status" value="1"/>
</dbReference>
<dbReference type="PANTHER" id="PTHR11548">
    <property type="entry name" value="THYMIDYLATE SYNTHASE 1"/>
    <property type="match status" value="1"/>
</dbReference>
<dbReference type="Pfam" id="PF00303">
    <property type="entry name" value="Thymidylat_synt"/>
    <property type="match status" value="1"/>
</dbReference>
<dbReference type="PRINTS" id="PR00108">
    <property type="entry name" value="THYMDSNTHASE"/>
</dbReference>
<dbReference type="SUPFAM" id="SSF55831">
    <property type="entry name" value="Thymidylate synthase/dCMP hydroxymethylase"/>
    <property type="match status" value="1"/>
</dbReference>
<dbReference type="PROSITE" id="PS00091">
    <property type="entry name" value="THYMIDYLATE_SYNTHASE"/>
    <property type="match status" value="1"/>
</dbReference>
<proteinExistence type="inferred from homology"/>
<sequence>MSIVTPYEDLLRFVLETGTPKSDRTGTGTRSLFGQQMRYDLSAGFPLLTTKKVHFKSVAYELLWFLRGDSNIGWLHEHGVTIWDEWASDTGELGPIYGVQWRSWPAPSGEHIDQISAALDLLRTDPDSRRIIVSAWNVGEIERMALPPCHAFFQFYVADGRLSCQLYQRSADLFLGVPFNIASYALLTHMMAAQAGLSVGEFIWTGGDCHIYDNHVEQVRLQLSREPRPYPKLLLADRDSIFEYTYEDIVVKNYDPHPAIKAPVAV</sequence>
<accession>A1KMA6</accession>
<evidence type="ECO:0000250" key="1">
    <source>
        <dbReference type="UniProtKB" id="P9WFR9"/>
    </source>
</evidence>
<evidence type="ECO:0000255" key="2">
    <source>
        <dbReference type="HAMAP-Rule" id="MF_00008"/>
    </source>
</evidence>
<protein>
    <recommendedName>
        <fullName evidence="2">Thymidylate synthase</fullName>
        <shortName evidence="2">TS</shortName>
        <shortName evidence="2">TSase</shortName>
        <ecNumber evidence="2">2.1.1.45</ecNumber>
    </recommendedName>
</protein>
<organism>
    <name type="scientific">Mycobacterium bovis (strain BCG / Pasteur 1173P2)</name>
    <dbReference type="NCBI Taxonomy" id="410289"/>
    <lineage>
        <taxon>Bacteria</taxon>
        <taxon>Bacillati</taxon>
        <taxon>Actinomycetota</taxon>
        <taxon>Actinomycetes</taxon>
        <taxon>Mycobacteriales</taxon>
        <taxon>Mycobacteriaceae</taxon>
        <taxon>Mycobacterium</taxon>
        <taxon>Mycobacterium tuberculosis complex</taxon>
    </lineage>
</organism>
<name>TYSY_MYCBP</name>
<comment type="function">
    <text evidence="2">Catalyzes the reductive methylation of 2'-deoxyuridine-5'-monophosphate (dUMP) to 2'-deoxythymidine-5'-monophosphate (dTMP) while utilizing 5,10-methylenetetrahydrofolate (mTHF) as the methyl donor and reductant in the reaction, yielding dihydrofolate (DHF) as a by-product. This enzymatic reaction provides an intracellular de novo source of dTMP, an essential precursor for DNA biosynthesis.</text>
</comment>
<comment type="catalytic activity">
    <reaction evidence="2">
        <text>dUMP + (6R)-5,10-methylene-5,6,7,8-tetrahydrofolate = 7,8-dihydrofolate + dTMP</text>
        <dbReference type="Rhea" id="RHEA:12104"/>
        <dbReference type="ChEBI" id="CHEBI:15636"/>
        <dbReference type="ChEBI" id="CHEBI:57451"/>
        <dbReference type="ChEBI" id="CHEBI:63528"/>
        <dbReference type="ChEBI" id="CHEBI:246422"/>
        <dbReference type="EC" id="2.1.1.45"/>
    </reaction>
</comment>
<comment type="pathway">
    <text evidence="2">Pyrimidine metabolism; dTTP biosynthesis.</text>
</comment>
<comment type="subunit">
    <text evidence="2">Homodimer.</text>
</comment>
<comment type="subcellular location">
    <subcellularLocation>
        <location evidence="2">Cytoplasm</location>
    </subcellularLocation>
</comment>
<comment type="similarity">
    <text evidence="2">Belongs to the thymidylate synthase family. Bacterial-type ThyA subfamily.</text>
</comment>
<comment type="sequence caution" evidence="1">
    <conflict type="erroneous initiation">
        <sequence resource="EMBL-CDS" id="CAL72769"/>
    </conflict>
    <text>Truncated N-terminus.</text>
</comment>